<gene>
    <name evidence="1" type="primary">murG</name>
    <name type="ordered locus">Sputcn32_0487</name>
</gene>
<dbReference type="EC" id="2.4.1.227" evidence="1"/>
<dbReference type="EMBL" id="CP000681">
    <property type="protein sequence ID" value="ABP74219.1"/>
    <property type="molecule type" value="Genomic_DNA"/>
</dbReference>
<dbReference type="SMR" id="A4Y2N6"/>
<dbReference type="STRING" id="319224.Sputcn32_0487"/>
<dbReference type="CAZy" id="GT28">
    <property type="family name" value="Glycosyltransferase Family 28"/>
</dbReference>
<dbReference type="KEGG" id="spc:Sputcn32_0487"/>
<dbReference type="eggNOG" id="COG0707">
    <property type="taxonomic scope" value="Bacteria"/>
</dbReference>
<dbReference type="HOGENOM" id="CLU_037404_2_0_6"/>
<dbReference type="UniPathway" id="UPA00219"/>
<dbReference type="GO" id="GO:0005886">
    <property type="term" value="C:plasma membrane"/>
    <property type="evidence" value="ECO:0007669"/>
    <property type="project" value="UniProtKB-SubCell"/>
</dbReference>
<dbReference type="GO" id="GO:0051991">
    <property type="term" value="F:UDP-N-acetyl-D-glucosamine:N-acetylmuramoyl-L-alanyl-D-glutamyl-meso-2,6-diaminopimelyl-D-alanyl-D-alanine-diphosphoundecaprenol 4-beta-N-acetylglucosaminlytransferase activity"/>
    <property type="evidence" value="ECO:0007669"/>
    <property type="project" value="RHEA"/>
</dbReference>
<dbReference type="GO" id="GO:0050511">
    <property type="term" value="F:undecaprenyldiphospho-muramoylpentapeptide beta-N-acetylglucosaminyltransferase activity"/>
    <property type="evidence" value="ECO:0007669"/>
    <property type="project" value="UniProtKB-UniRule"/>
</dbReference>
<dbReference type="GO" id="GO:0005975">
    <property type="term" value="P:carbohydrate metabolic process"/>
    <property type="evidence" value="ECO:0007669"/>
    <property type="project" value="InterPro"/>
</dbReference>
<dbReference type="GO" id="GO:0051301">
    <property type="term" value="P:cell division"/>
    <property type="evidence" value="ECO:0007669"/>
    <property type="project" value="UniProtKB-KW"/>
</dbReference>
<dbReference type="GO" id="GO:0071555">
    <property type="term" value="P:cell wall organization"/>
    <property type="evidence" value="ECO:0007669"/>
    <property type="project" value="UniProtKB-KW"/>
</dbReference>
<dbReference type="GO" id="GO:0030259">
    <property type="term" value="P:lipid glycosylation"/>
    <property type="evidence" value="ECO:0007669"/>
    <property type="project" value="UniProtKB-UniRule"/>
</dbReference>
<dbReference type="GO" id="GO:0009252">
    <property type="term" value="P:peptidoglycan biosynthetic process"/>
    <property type="evidence" value="ECO:0007669"/>
    <property type="project" value="UniProtKB-UniRule"/>
</dbReference>
<dbReference type="GO" id="GO:0008360">
    <property type="term" value="P:regulation of cell shape"/>
    <property type="evidence" value="ECO:0007669"/>
    <property type="project" value="UniProtKB-KW"/>
</dbReference>
<dbReference type="CDD" id="cd03785">
    <property type="entry name" value="GT28_MurG"/>
    <property type="match status" value="1"/>
</dbReference>
<dbReference type="Gene3D" id="3.40.50.2000">
    <property type="entry name" value="Glycogen Phosphorylase B"/>
    <property type="match status" value="2"/>
</dbReference>
<dbReference type="HAMAP" id="MF_00033">
    <property type="entry name" value="MurG"/>
    <property type="match status" value="1"/>
</dbReference>
<dbReference type="InterPro" id="IPR006009">
    <property type="entry name" value="GlcNAc_MurG"/>
</dbReference>
<dbReference type="InterPro" id="IPR007235">
    <property type="entry name" value="Glyco_trans_28_C"/>
</dbReference>
<dbReference type="InterPro" id="IPR004276">
    <property type="entry name" value="GlycoTrans_28_N"/>
</dbReference>
<dbReference type="NCBIfam" id="TIGR01133">
    <property type="entry name" value="murG"/>
    <property type="match status" value="1"/>
</dbReference>
<dbReference type="PANTHER" id="PTHR21015:SF22">
    <property type="entry name" value="GLYCOSYLTRANSFERASE"/>
    <property type="match status" value="1"/>
</dbReference>
<dbReference type="PANTHER" id="PTHR21015">
    <property type="entry name" value="UDP-N-ACETYLGLUCOSAMINE--N-ACETYLMURAMYL-(PENTAPEPTIDE) PYROPHOSPHORYL-UNDECAPRENOL N-ACETYLGLUCOSAMINE TRANSFERASE 1"/>
    <property type="match status" value="1"/>
</dbReference>
<dbReference type="Pfam" id="PF04101">
    <property type="entry name" value="Glyco_tran_28_C"/>
    <property type="match status" value="1"/>
</dbReference>
<dbReference type="Pfam" id="PF03033">
    <property type="entry name" value="Glyco_transf_28"/>
    <property type="match status" value="1"/>
</dbReference>
<dbReference type="SUPFAM" id="SSF53756">
    <property type="entry name" value="UDP-Glycosyltransferase/glycogen phosphorylase"/>
    <property type="match status" value="1"/>
</dbReference>
<sequence length="362" mass="38422">MTQEGKRILVMAGGTGGHVFPALAVAKYLAQQGWQVRWLGTADRMEARLVPQYGFDIDFIDIKGVRGNGLVRKLAAPFKVIRSILQAKAVIAEFKPDVVLGMGGFASGPGGVAARLAGIPLVLHEQNAIPGMTNKLLSRIATQVLCAFKNTFTTVKSKVVGNPIRRELIALGAEPKPLADDALKVLVVGGSLGAKIFNDLMPSVVAALSKQQSITVWHQVGKDNLAGVKAAYQQQGQEGGVNIAEFIDDMEAAYRWADVVLCRAGALTVSELAAVGLPSILVPYPHAVDDHQTRNGQVLVEAGAAFLLPQAILDVDKLVGKLQLLANDRTELARMGQRARDVAVLDATEQVAAVCISLAEKG</sequence>
<keyword id="KW-0131">Cell cycle</keyword>
<keyword id="KW-0132">Cell division</keyword>
<keyword id="KW-0997">Cell inner membrane</keyword>
<keyword id="KW-1003">Cell membrane</keyword>
<keyword id="KW-0133">Cell shape</keyword>
<keyword id="KW-0961">Cell wall biogenesis/degradation</keyword>
<keyword id="KW-0328">Glycosyltransferase</keyword>
<keyword id="KW-0472">Membrane</keyword>
<keyword id="KW-0573">Peptidoglycan synthesis</keyword>
<keyword id="KW-0808">Transferase</keyword>
<organism>
    <name type="scientific">Shewanella putrefaciens (strain CN-32 / ATCC BAA-453)</name>
    <dbReference type="NCBI Taxonomy" id="319224"/>
    <lineage>
        <taxon>Bacteria</taxon>
        <taxon>Pseudomonadati</taxon>
        <taxon>Pseudomonadota</taxon>
        <taxon>Gammaproteobacteria</taxon>
        <taxon>Alteromonadales</taxon>
        <taxon>Shewanellaceae</taxon>
        <taxon>Shewanella</taxon>
    </lineage>
</organism>
<accession>A4Y2N6</accession>
<proteinExistence type="inferred from homology"/>
<name>MURG_SHEPC</name>
<reference key="1">
    <citation type="submission" date="2007-04" db="EMBL/GenBank/DDBJ databases">
        <title>Complete sequence of Shewanella putrefaciens CN-32.</title>
        <authorList>
            <consortium name="US DOE Joint Genome Institute"/>
            <person name="Copeland A."/>
            <person name="Lucas S."/>
            <person name="Lapidus A."/>
            <person name="Barry K."/>
            <person name="Detter J.C."/>
            <person name="Glavina del Rio T."/>
            <person name="Hammon N."/>
            <person name="Israni S."/>
            <person name="Dalin E."/>
            <person name="Tice H."/>
            <person name="Pitluck S."/>
            <person name="Chain P."/>
            <person name="Malfatti S."/>
            <person name="Shin M."/>
            <person name="Vergez L."/>
            <person name="Schmutz J."/>
            <person name="Larimer F."/>
            <person name="Land M."/>
            <person name="Hauser L."/>
            <person name="Kyrpides N."/>
            <person name="Mikhailova N."/>
            <person name="Romine M.F."/>
            <person name="Fredrickson J."/>
            <person name="Tiedje J."/>
            <person name="Richardson P."/>
        </authorList>
    </citation>
    <scope>NUCLEOTIDE SEQUENCE [LARGE SCALE GENOMIC DNA]</scope>
    <source>
        <strain>CN-32 / ATCC BAA-453</strain>
    </source>
</reference>
<comment type="function">
    <text evidence="1">Cell wall formation. Catalyzes the transfer of a GlcNAc subunit on undecaprenyl-pyrophosphoryl-MurNAc-pentapeptide (lipid intermediate I) to form undecaprenyl-pyrophosphoryl-MurNAc-(pentapeptide)GlcNAc (lipid intermediate II).</text>
</comment>
<comment type="catalytic activity">
    <reaction evidence="1">
        <text>di-trans,octa-cis-undecaprenyl diphospho-N-acetyl-alpha-D-muramoyl-L-alanyl-D-glutamyl-meso-2,6-diaminopimeloyl-D-alanyl-D-alanine + UDP-N-acetyl-alpha-D-glucosamine = di-trans,octa-cis-undecaprenyl diphospho-[N-acetyl-alpha-D-glucosaminyl-(1-&gt;4)]-N-acetyl-alpha-D-muramoyl-L-alanyl-D-glutamyl-meso-2,6-diaminopimeloyl-D-alanyl-D-alanine + UDP + H(+)</text>
        <dbReference type="Rhea" id="RHEA:31227"/>
        <dbReference type="ChEBI" id="CHEBI:15378"/>
        <dbReference type="ChEBI" id="CHEBI:57705"/>
        <dbReference type="ChEBI" id="CHEBI:58223"/>
        <dbReference type="ChEBI" id="CHEBI:61387"/>
        <dbReference type="ChEBI" id="CHEBI:61388"/>
        <dbReference type="EC" id="2.4.1.227"/>
    </reaction>
</comment>
<comment type="pathway">
    <text evidence="1">Cell wall biogenesis; peptidoglycan biosynthesis.</text>
</comment>
<comment type="subcellular location">
    <subcellularLocation>
        <location evidence="1">Cell inner membrane</location>
        <topology evidence="1">Peripheral membrane protein</topology>
        <orientation evidence="1">Cytoplasmic side</orientation>
    </subcellularLocation>
</comment>
<comment type="similarity">
    <text evidence="1">Belongs to the glycosyltransferase 28 family. MurG subfamily.</text>
</comment>
<feature type="chain" id="PRO_1000002689" description="UDP-N-acetylglucosamine--N-acetylmuramyl-(pentapeptide) pyrophosphoryl-undecaprenol N-acetylglucosamine transferase">
    <location>
        <begin position="1"/>
        <end position="362"/>
    </location>
</feature>
<feature type="binding site" evidence="1">
    <location>
        <begin position="15"/>
        <end position="17"/>
    </location>
    <ligand>
        <name>UDP-N-acetyl-alpha-D-glucosamine</name>
        <dbReference type="ChEBI" id="CHEBI:57705"/>
    </ligand>
</feature>
<feature type="binding site" evidence="1">
    <location>
        <position position="127"/>
    </location>
    <ligand>
        <name>UDP-N-acetyl-alpha-D-glucosamine</name>
        <dbReference type="ChEBI" id="CHEBI:57705"/>
    </ligand>
</feature>
<feature type="binding site" evidence="1">
    <location>
        <position position="165"/>
    </location>
    <ligand>
        <name>UDP-N-acetyl-alpha-D-glucosamine</name>
        <dbReference type="ChEBI" id="CHEBI:57705"/>
    </ligand>
</feature>
<feature type="binding site" evidence="1">
    <location>
        <position position="191"/>
    </location>
    <ligand>
        <name>UDP-N-acetyl-alpha-D-glucosamine</name>
        <dbReference type="ChEBI" id="CHEBI:57705"/>
    </ligand>
</feature>
<feature type="binding site" evidence="1">
    <location>
        <position position="247"/>
    </location>
    <ligand>
        <name>UDP-N-acetyl-alpha-D-glucosamine</name>
        <dbReference type="ChEBI" id="CHEBI:57705"/>
    </ligand>
</feature>
<feature type="binding site" evidence="1">
    <location>
        <begin position="266"/>
        <end position="271"/>
    </location>
    <ligand>
        <name>UDP-N-acetyl-alpha-D-glucosamine</name>
        <dbReference type="ChEBI" id="CHEBI:57705"/>
    </ligand>
</feature>
<feature type="binding site" evidence="1">
    <location>
        <position position="292"/>
    </location>
    <ligand>
        <name>UDP-N-acetyl-alpha-D-glucosamine</name>
        <dbReference type="ChEBI" id="CHEBI:57705"/>
    </ligand>
</feature>
<protein>
    <recommendedName>
        <fullName evidence="1">UDP-N-acetylglucosamine--N-acetylmuramyl-(pentapeptide) pyrophosphoryl-undecaprenol N-acetylglucosamine transferase</fullName>
        <ecNumber evidence="1">2.4.1.227</ecNumber>
    </recommendedName>
    <alternativeName>
        <fullName evidence="1">Undecaprenyl-PP-MurNAc-pentapeptide-UDPGlcNAc GlcNAc transferase</fullName>
    </alternativeName>
</protein>
<evidence type="ECO:0000255" key="1">
    <source>
        <dbReference type="HAMAP-Rule" id="MF_00033"/>
    </source>
</evidence>